<sequence length="38" mass="4497">MTQSNPNEQNVELNRTSLYWGLLLIFVLAVLFSNYFFN</sequence>
<feature type="chain" id="PRO_0000276200" description="Photosystem II reaction center protein L">
    <location>
        <begin position="1"/>
        <end position="38"/>
    </location>
</feature>
<feature type="transmembrane region" description="Helical" evidence="1">
    <location>
        <begin position="17"/>
        <end position="37"/>
    </location>
</feature>
<reference key="1">
    <citation type="journal article" date="2007" name="Theor. Appl. Genet.">
        <title>Complete chloroplast genome sequences of Hordeum vulgare, Sorghum bicolor and Agrostis stolonifera, and comparative analyses with other grass genomes.</title>
        <authorList>
            <person name="Saski C."/>
            <person name="Lee S.-B."/>
            <person name="Fjellheim S."/>
            <person name="Guda C."/>
            <person name="Jansen R.K."/>
            <person name="Luo H."/>
            <person name="Tomkins J."/>
            <person name="Rognli O.A."/>
            <person name="Daniell H."/>
            <person name="Clarke J.L."/>
        </authorList>
    </citation>
    <scope>NUCLEOTIDE SEQUENCE [LARGE SCALE GENOMIC DNA]</scope>
    <source>
        <strain>cv. Penn A-4</strain>
    </source>
</reference>
<dbReference type="EMBL" id="EF115543">
    <property type="protein sequence ID" value="ABK79595.1"/>
    <property type="molecule type" value="Genomic_DNA"/>
</dbReference>
<dbReference type="RefSeq" id="YP_874751.1">
    <property type="nucleotide sequence ID" value="NC_008591.1"/>
</dbReference>
<dbReference type="SMR" id="A1EA23"/>
<dbReference type="GeneID" id="4524993"/>
<dbReference type="GO" id="GO:0009535">
    <property type="term" value="C:chloroplast thylakoid membrane"/>
    <property type="evidence" value="ECO:0007669"/>
    <property type="project" value="UniProtKB-SubCell"/>
</dbReference>
<dbReference type="GO" id="GO:0009539">
    <property type="term" value="C:photosystem II reaction center"/>
    <property type="evidence" value="ECO:0007669"/>
    <property type="project" value="InterPro"/>
</dbReference>
<dbReference type="GO" id="GO:0015979">
    <property type="term" value="P:photosynthesis"/>
    <property type="evidence" value="ECO:0007669"/>
    <property type="project" value="UniProtKB-UniRule"/>
</dbReference>
<dbReference type="HAMAP" id="MF_01317">
    <property type="entry name" value="PSII_PsbL"/>
    <property type="match status" value="1"/>
</dbReference>
<dbReference type="InterPro" id="IPR003372">
    <property type="entry name" value="PSII_PsbL"/>
</dbReference>
<dbReference type="InterPro" id="IPR037266">
    <property type="entry name" value="PSII_PsbL_sf"/>
</dbReference>
<dbReference type="NCBIfam" id="NF001972">
    <property type="entry name" value="PRK00753.1"/>
    <property type="match status" value="1"/>
</dbReference>
<dbReference type="Pfam" id="PF02419">
    <property type="entry name" value="PsbL"/>
    <property type="match status" value="1"/>
</dbReference>
<dbReference type="SUPFAM" id="SSF161017">
    <property type="entry name" value="Photosystem II reaction center protein L, PsbL"/>
    <property type="match status" value="1"/>
</dbReference>
<organism>
    <name type="scientific">Agrostis stolonifera</name>
    <name type="common">Creeping bentgrass</name>
    <dbReference type="NCBI Taxonomy" id="63632"/>
    <lineage>
        <taxon>Eukaryota</taxon>
        <taxon>Viridiplantae</taxon>
        <taxon>Streptophyta</taxon>
        <taxon>Embryophyta</taxon>
        <taxon>Tracheophyta</taxon>
        <taxon>Spermatophyta</taxon>
        <taxon>Magnoliopsida</taxon>
        <taxon>Liliopsida</taxon>
        <taxon>Poales</taxon>
        <taxon>Poaceae</taxon>
        <taxon>BOP clade</taxon>
        <taxon>Pooideae</taxon>
        <taxon>Poodae</taxon>
        <taxon>Poeae</taxon>
        <taxon>Poeae Chloroplast Group 1 (Aveneae type)</taxon>
        <taxon>Agrostidodinae</taxon>
        <taxon>Agrostidinae</taxon>
        <taxon>Agrostis</taxon>
    </lineage>
</organism>
<keyword id="KW-0150">Chloroplast</keyword>
<keyword id="KW-0472">Membrane</keyword>
<keyword id="KW-0602">Photosynthesis</keyword>
<keyword id="KW-0604">Photosystem II</keyword>
<keyword id="KW-0934">Plastid</keyword>
<keyword id="KW-0674">Reaction center</keyword>
<keyword id="KW-0793">Thylakoid</keyword>
<keyword id="KW-0812">Transmembrane</keyword>
<keyword id="KW-1133">Transmembrane helix</keyword>
<evidence type="ECO:0000255" key="1">
    <source>
        <dbReference type="HAMAP-Rule" id="MF_01317"/>
    </source>
</evidence>
<name>PSBL_AGRST</name>
<accession>A1EA23</accession>
<comment type="function">
    <text evidence="1">One of the components of the core complex of photosystem II (PSII). PSII is a light-driven water:plastoquinone oxidoreductase that uses light energy to abstract electrons from H(2)O, generating O(2) and a proton gradient subsequently used for ATP formation. It consists of a core antenna complex that captures photons, and an electron transfer chain that converts photonic excitation into a charge separation. This subunit is found at the monomer-monomer interface and is required for correct PSII assembly and/or dimerization.</text>
</comment>
<comment type="subunit">
    <text evidence="1">PSII is composed of 1 copy each of membrane proteins PsbA, PsbB, PsbC, PsbD, PsbE, PsbF, PsbH, PsbI, PsbJ, PsbK, PsbL, PsbM, PsbT, PsbX, PsbY, PsbZ, Psb30/Ycf12, at least 3 peripheral proteins of the oxygen-evolving complex and a large number of cofactors. It forms dimeric complexes.</text>
</comment>
<comment type="subcellular location">
    <subcellularLocation>
        <location evidence="1">Plastid</location>
        <location evidence="1">Chloroplast thylakoid membrane</location>
        <topology evidence="1">Single-pass membrane protein</topology>
    </subcellularLocation>
</comment>
<comment type="similarity">
    <text evidence="1">Belongs to the PsbL family.</text>
</comment>
<protein>
    <recommendedName>
        <fullName evidence="1">Photosystem II reaction center protein L</fullName>
        <shortName evidence="1">PSII-L</shortName>
    </recommendedName>
</protein>
<proteinExistence type="inferred from homology"/>
<geneLocation type="chloroplast"/>
<gene>
    <name evidence="1" type="primary">psbL</name>
</gene>